<organismHost>
    <name type="scientific">Homo sapiens</name>
    <name type="common">Human</name>
    <dbReference type="NCBI Taxonomy" id="9606"/>
</organismHost>
<organismHost>
    <name type="scientific">Sigmodon hispidus</name>
    <name type="common">Hispid cotton rat</name>
    <dbReference type="NCBI Taxonomy" id="42415"/>
</organismHost>
<accession>P0DTJ0</accession>
<name>GP_BCCV</name>
<evidence type="ECO:0000250" key="1">
    <source>
        <dbReference type="UniProtKB" id="P08668"/>
    </source>
</evidence>
<evidence type="ECO:0000250" key="2">
    <source>
        <dbReference type="UniProtKB" id="P0DTJ1"/>
    </source>
</evidence>
<evidence type="ECO:0000250" key="3">
    <source>
        <dbReference type="UniProtKB" id="P27312"/>
    </source>
</evidence>
<evidence type="ECO:0000250" key="4">
    <source>
        <dbReference type="UniProtKB" id="P41266"/>
    </source>
</evidence>
<evidence type="ECO:0000250" key="5">
    <source>
        <dbReference type="UniProtKB" id="Q9E006"/>
    </source>
</evidence>
<evidence type="ECO:0000255" key="6"/>
<evidence type="ECO:0000255" key="7">
    <source>
        <dbReference type="PROSITE-ProRule" id="PRU00379"/>
    </source>
</evidence>
<evidence type="ECO:0000269" key="8">
    <source>
    </source>
</evidence>
<evidence type="ECO:0000305" key="9"/>
<evidence type="ECO:0000305" key="10">
    <source>
    </source>
</evidence>
<comment type="function">
    <molecule>Glycoprotein N</molecule>
    <text evidence="1 3">Forms homotetramers with glycoprotein C at the surface of the virion (By similarity). Attaches the virion to host cell receptors including integrin ITGAV/ITGB3 (By similarity). This attachment induces virion internalization predominantly through clathrin-dependent endocytosis (By similarity). Mediates the assembly and budding of infectious virus particles through its interaction with the nucleocapsid protein and the viral genome (By similarity). May dysregulate normal immune and endothelial cell responses through an ITAM motif (By similarity). Translocates to mitochondria, binds to host TUFM and recruits MAP1LC3B (By similarity). These interactions induce mitochondrial autophagy and therefore destruction of host MAVS leading to inhibition of type I interferon (IFN) responses (By similarity). Concomitant breakdown of glycoprotein N is apparently prevented by the nucleoprotein that may inhibit Gn-stimulated autophagosome-lysosome fusion (By similarity). Interacts with the viral genomic RNA (By similarity).</text>
</comment>
<comment type="function">
    <molecule>Glycoprotein C</molecule>
    <text evidence="1">Forms homotetramers with glycoprotein N at the surface of the virion. Attaches the virion to host cell receptors including integrin ITGAV/ITGB3. This attachment induces virion internalization predominantly through clathrin-dependent endocytosis. Class II fusion protein that promotes fusion of viral membrane with host endosomal membrane after endocytosis of the virion.</text>
</comment>
<comment type="subunit">
    <molecule>Glycoprotein N</molecule>
    <text evidence="1 2">Homodimer. Homotetramer; forms heterotetrameric Gn-Gc spikes in the pre-fusion conformation (By similarity). Interacts (via C-terminus) with the nucleoprotein (By similarity). Interacts with host TUFM; this interaction contributes to the virus-induced degradation of mitochondria by autophagy, which leads to degradation of host MAVS and inhibition of type I interferon (IFN) responses (By similarity). Interacts with host MAP1LC3B; this interaction contributes to the virus-induced degradation of mitochondria by autophagy, which leads to degradation of host MAVS and inhibition of type I interferon (IFN) responses (By similarity).</text>
</comment>
<comment type="subunit">
    <molecule>Glycoprotein C</molecule>
    <text evidence="1 3">Homodimer. Homotetramer; forms heterotetrameric Gn-Gc spikes in the pre-fusion conformation. Homotrimer; forms homotrimer in the post-fusion conformation at acidic pH (By similarity). Interacts (via C-terminus) with the nucleoprotein (By similarity).</text>
</comment>
<comment type="subcellular location">
    <molecule>Glycoprotein N</molecule>
    <subcellularLocation>
        <location evidence="1">Virion membrane</location>
        <topology evidence="9">Multi-pass membrane protein</topology>
    </subcellularLocation>
    <subcellularLocation>
        <location evidence="8">Host cell surface</location>
    </subcellularLocation>
    <subcellularLocation>
        <location evidence="1">Host Golgi apparatus membrane</location>
        <topology evidence="1">Multi-pass membrane protein</topology>
    </subcellularLocation>
    <subcellularLocation>
        <location evidence="1">Host endoplasmic reticulum membrane</location>
        <topology evidence="1">Multi-pass membrane protein</topology>
    </subcellularLocation>
    <subcellularLocation>
        <location evidence="1">Host mitochondrion</location>
    </subcellularLocation>
    <text evidence="10">Interaction between glycoprotein N and glycoprotein C is essential for proper targeting of glycoprotein N to the host plasma membrane, where virion budding occurs.</text>
</comment>
<comment type="subcellular location">
    <molecule>Glycoprotein C</molecule>
    <subcellularLocation>
        <location evidence="1">Virion membrane</location>
        <topology evidence="9">Single-pass type I membrane protein</topology>
    </subcellularLocation>
    <subcellularLocation>
        <location evidence="8">Host cell surface</location>
    </subcellularLocation>
    <subcellularLocation>
        <location evidence="1">Host Golgi apparatus membrane</location>
        <topology evidence="1">Single-pass type I membrane protein</topology>
    </subcellularLocation>
    <subcellularLocation>
        <location evidence="1">Host endoplasmic reticulum membrane</location>
        <topology evidence="1">Single-pass type I membrane protein</topology>
    </subcellularLocation>
    <text evidence="1 10">Budding probably takes place at the host plasma membrane (Probable). Glycoprotein C cytoplasmic tail is important for efficient Golgi localization (By similarity).</text>
</comment>
<comment type="domain">
    <molecule>Glycoprotein N</molecule>
    <text evidence="1 2 3 5">The YxxL motif at the C-terminus is indispensable for the interaction with MAP1LC3B and for the Gn-mediated induction of mitochondrial autophagy (By similarity). The cytoplasmic tail is involved in the inhibition of the host innate immune response (By similarity). The C-terminus of the cytoplasmic tail is involved in binding to the viral genome and the nucleocapsid (By similarity). Contains 2 contiguous zinc-fingers (By similarity).</text>
</comment>
<comment type="domain">
    <molecule>Glycoprotein C</molecule>
    <text evidence="3">The C-terminus is necessary for proper localization in the Golgi (By similarity). The cytoplasmic tail is involved in binding to the nucleocapsid (By similarity).</text>
</comment>
<comment type="PTM">
    <molecule>Envelopment polyprotein</molecule>
    <text evidence="1">Envelope polyprotein precursor is quickly cleaved in vivo just after synthesis, presumably by host signal peptidase.</text>
</comment>
<comment type="similarity">
    <text evidence="9">Belongs to the hantavirus envelope glycoprotein family.</text>
</comment>
<gene>
    <name type="primary">GP</name>
</gene>
<protein>
    <recommendedName>
        <fullName>Envelopment polyprotein</fullName>
    </recommendedName>
    <alternativeName>
        <fullName evidence="1">Glycoprotein precursor</fullName>
    </alternativeName>
    <alternativeName>
        <fullName>M polyprotein</fullName>
    </alternativeName>
    <component>
        <recommendedName>
            <fullName evidence="1">Glycoprotein N</fullName>
            <shortName>Gn</shortName>
        </recommendedName>
        <alternativeName>
            <fullName>Glycoprotein G1</fullName>
        </alternativeName>
    </component>
    <component>
        <recommendedName>
            <fullName evidence="1">Glycoprotein C</fullName>
            <shortName>Gc</shortName>
        </recommendedName>
        <alternativeName>
            <fullName>Glycoprotein G2</fullName>
        </alternativeName>
    </component>
</protein>
<feature type="signal peptide" evidence="6">
    <location>
        <begin position="1"/>
        <end position="18"/>
    </location>
</feature>
<feature type="chain" id="PRO_0000455194" description="Envelopment polyprotein">
    <location>
        <begin position="19"/>
        <end position="1141"/>
    </location>
</feature>
<feature type="chain" id="PRO_0000455195" description="Glycoprotein N">
    <location>
        <begin position="19"/>
        <end position="654"/>
    </location>
</feature>
<feature type="chain" id="PRO_0000455196" description="Glycoprotein C">
    <location>
        <begin position="655"/>
        <end position="1141"/>
    </location>
</feature>
<feature type="topological domain" description="Lumenal" evidence="6">
    <location>
        <begin position="19"/>
        <end position="483"/>
    </location>
</feature>
<feature type="transmembrane region" description="Helical" evidence="6">
    <location>
        <begin position="484"/>
        <end position="506"/>
    </location>
</feature>
<feature type="topological domain" description="Cytoplasmic" evidence="6">
    <location>
        <begin position="507"/>
        <end position="633"/>
    </location>
</feature>
<feature type="transmembrane region" description="Helical" evidence="6">
    <location>
        <begin position="634"/>
        <end position="654"/>
    </location>
</feature>
<feature type="topological domain" description="Lumenal" evidence="6">
    <location>
        <begin position="655"/>
        <end position="1110"/>
    </location>
</feature>
<feature type="transmembrane region" description="Helical" evidence="6">
    <location>
        <begin position="1111"/>
        <end position="1131"/>
    </location>
</feature>
<feature type="topological domain" description="Cytoplasmic" evidence="6">
    <location>
        <begin position="1132"/>
        <end position="1141"/>
    </location>
</feature>
<feature type="domain" description="ITAM" evidence="7">
    <location>
        <begin position="617"/>
        <end position="640"/>
    </location>
</feature>
<feature type="zinc finger region" description="CCHC-type 1" evidence="5">
    <location>
        <begin position="551"/>
        <end position="571"/>
    </location>
</feature>
<feature type="zinc finger region" description="CCHC-type 2" evidence="5">
    <location>
        <begin position="576"/>
        <end position="597"/>
    </location>
</feature>
<feature type="region of interest" description="Binding to the ribonucleoprotein" evidence="5">
    <location>
        <begin position="522"/>
        <end position="539"/>
    </location>
</feature>
<feature type="region of interest" description="Binding to the ribonucleoprotein" evidence="3">
    <location>
        <begin position="594"/>
        <end position="611"/>
    </location>
</feature>
<feature type="region of interest" description="Binding to the ribonucleoprotein" evidence="5">
    <location>
        <begin position="598"/>
        <end position="609"/>
    </location>
</feature>
<feature type="region of interest" description="Binding to the ribonucleoprotein" evidence="3">
    <location>
        <begin position="617"/>
        <end position="631"/>
    </location>
</feature>
<feature type="region of interest" description="Fusion loop" evidence="4">
    <location>
        <begin position="763"/>
        <end position="783"/>
    </location>
</feature>
<feature type="region of interest" description="Binding to the ribonucleoprotein" evidence="3">
    <location>
        <begin position="1127"/>
        <end position="1141"/>
    </location>
</feature>
<feature type="short sequence motif" description="YxxL" evidence="1">
    <location>
        <begin position="621"/>
        <end position="624"/>
    </location>
</feature>
<feature type="site" description="Cleavage; by host signal peptidase" evidence="1">
    <location>
        <begin position="654"/>
        <end position="655"/>
    </location>
</feature>
<feature type="modified residue" description="Phosphotyrosine" evidence="7">
    <location>
        <position position="621"/>
    </location>
</feature>
<feature type="modified residue" description="Phosphotyrosine" evidence="7">
    <location>
        <position position="634"/>
    </location>
</feature>
<feature type="glycosylation site" description="N-linked (GlcNAc...) asparagine; by host" evidence="6">
    <location>
        <position position="141"/>
    </location>
</feature>
<feature type="glycosylation site" description="N-linked (GlcNAc...) asparagine; by host" evidence="6">
    <location>
        <position position="353"/>
    </location>
</feature>
<feature type="glycosylation site" description="N-linked (GlcNAc...) asparagine; by host" evidence="6">
    <location>
        <position position="405"/>
    </location>
</feature>
<feature type="glycosylation site" description="N-linked (GlcNAc...) asparagine; by host" evidence="1">
    <location>
        <position position="933"/>
    </location>
</feature>
<feature type="disulfide bond" evidence="5">
    <location>
        <begin position="30"/>
        <end position="158"/>
    </location>
</feature>
<feature type="disulfide bond" evidence="5">
    <location>
        <begin position="64"/>
        <end position="164"/>
    </location>
</feature>
<feature type="disulfide bond" evidence="5">
    <location>
        <begin position="113"/>
        <end position="135"/>
    </location>
</feature>
<feature type="disulfide bond" evidence="5">
    <location>
        <begin position="140"/>
        <end position="145"/>
    </location>
</feature>
<feature type="disulfide bond" evidence="5">
    <location>
        <begin position="182"/>
        <end position="192"/>
    </location>
</feature>
<feature type="disulfide bond" evidence="5">
    <location>
        <begin position="217"/>
        <end position="253"/>
    </location>
</feature>
<feature type="disulfide bond" evidence="5">
    <location>
        <begin position="242"/>
        <end position="357"/>
    </location>
</feature>
<feature type="disulfide bond" evidence="5">
    <location>
        <begin position="382"/>
        <end position="441"/>
    </location>
</feature>
<feature type="disulfide bond" evidence="5">
    <location>
        <begin position="386"/>
        <end position="395"/>
    </location>
</feature>
<feature type="disulfide bond" evidence="5">
    <location>
        <begin position="458"/>
        <end position="481"/>
    </location>
</feature>
<feature type="disulfide bond" evidence="1">
    <location>
        <begin position="741"/>
        <end position="776"/>
    </location>
</feature>
<feature type="disulfide bond" evidence="1">
    <location>
        <begin position="745"/>
        <end position="783"/>
    </location>
</feature>
<feature type="disulfide bond" evidence="1">
    <location>
        <begin position="757"/>
        <end position="890"/>
    </location>
</feature>
<feature type="disulfide bond" evidence="1">
    <location>
        <begin position="771"/>
        <end position="901"/>
    </location>
</feature>
<feature type="disulfide bond" evidence="1">
    <location>
        <begin position="786"/>
        <end position="909"/>
    </location>
</feature>
<feature type="disulfide bond" evidence="1">
    <location>
        <begin position="812"/>
        <end position="821"/>
    </location>
</feature>
<feature type="disulfide bond" evidence="1">
    <location>
        <begin position="829"/>
        <end position="838"/>
    </location>
</feature>
<feature type="disulfide bond" evidence="1">
    <location>
        <begin position="869"/>
        <end position="873"/>
    </location>
</feature>
<feature type="disulfide bond" evidence="1">
    <location>
        <begin position="975"/>
        <end position="1005"/>
    </location>
</feature>
<feature type="disulfide bond" evidence="1">
    <location>
        <begin position="998"/>
        <end position="1050"/>
    </location>
</feature>
<feature type="disulfide bond" evidence="1">
    <location>
        <begin position="1015"/>
        <end position="1020"/>
    </location>
</feature>
<feature type="disulfide bond" evidence="1">
    <location>
        <begin position="1051"/>
        <end position="1056"/>
    </location>
</feature>
<feature type="disulfide bond" evidence="5">
    <location>
        <begin position="1090"/>
        <end position="1094"/>
    </location>
</feature>
<sequence>MGRLYLIVLGVLITATAGFPRSVHELKIECPHTVVLGQGYVTGSVELGFIALDQVTDLKIESSCSFDHHAAPTTTQNFTQLKWAKTASTTDTTNAAETTFESKSTEVHLKGVCTIPSNVLDGPSRPVTGRKTVVCYDLACNQTHCQPTVHLLAPIQTCMSVRSCMISLLASRIQVVYEKTYCVTGQLIEGLCFNPVPNLALTQPGHTYDTFTLPITCFLVAKKGANLKIAVELEKLTTKTGCAENALQAYYICFIGQHSEPLTVPMLEDYRSAEIFTRIMMNPKGEDHDMEQSSQGALRIVGPIKGKVPPTETSDTVQGIAFAGLPMYSSFSSLVRKAEPEYLFSPGIIAESNHSSCDKKTLPLTWRGFLSMSGEIERITGCNVFCTLAGPGASCEAYSENGIFNISSPTCLVNKVQKFRGSEQRINFISQRIDQDVIVYCNGQKKVILTKTLVIGQCIYTFTSIFSLIPSVAHSLAVELCVPGIHGWATIALVITFCFGWLLIPTTTMVVLKCLRLLTYSCSHYSTESKFKVILEKVKVEYQKTMGSMVCDICHHECETAKELESHKKSCADGQCPYCMTITEATESALQAHYAVCKLTGRFHEALKKSLKKPEVQRGCYRTLGVFRYKSRCYVGLVWMCLLTLELIVWAASADTPLLEPGWSDTAHGVGDIPMKTDLELDFAIPSSSSYSYRRRLVNPANSDETVPFHFQLERQVIHAEIQSLGHWMDATFNIISAFHCYGECKKYSYPWQTAKCFFEKDYQYETSWSCNPPDCPGVGTGCTACGIYLDKLKSVGKAYKVITLKYARKVCIQLGTEQTCKNIDVNDCLVTSSIKVCMIGTISKFQPGDTLLFLGPLEEGGLVLKQWCTTTCSFGDPGDIMSTTSGMRCPEHTGSFRKICGFATTPVCEYQGNTVSGFKRLMATKDSFQSFNVSEVHITTTKLEWSDPDSNIKDHINLILNRDVSFQDLSDNPCKVDLSTQAIDGAWGSGVGFTLTCIVGLTECSSFMTSIKVCDMAMCYGASVVNLVRGSNTVKIVGKGGHSGSTFRCCHDKDCTSNGLLASAPHLERVTGFNQIDSDKVYDDGAPPCSIKCWFAKSGEWLLGILNGNWVVVAVLVIILLISIFLFSFFCPIRSHKKQL</sequence>
<organism>
    <name type="scientific">Black Creek Canal orthohantavirus</name>
    <name type="common">BCCV</name>
    <name type="synonym">Black Creek Canal virus</name>
    <dbReference type="NCBI Taxonomy" id="3052490"/>
    <lineage>
        <taxon>Viruses</taxon>
        <taxon>Riboviria</taxon>
        <taxon>Orthornavirae</taxon>
        <taxon>Negarnaviricota</taxon>
        <taxon>Polyploviricotina</taxon>
        <taxon>Ellioviricetes</taxon>
        <taxon>Bunyavirales</taxon>
        <taxon>Hantaviridae</taxon>
        <taxon>Mammantavirinae</taxon>
        <taxon>Orthohantavirus</taxon>
    </lineage>
</organism>
<reference key="1">
    <citation type="journal article" date="1995" name="Virology">
        <title>Genetic and serologic analysis of Black Creek Canal virus and its association with human disease and Sigmodon hispidus infection.</title>
        <authorList>
            <person name="Ravkov E.V."/>
            <person name="Rollin P.E."/>
            <person name="Ksiazek T.G."/>
            <person name="Peters C.J."/>
            <person name="Nichol S.T."/>
        </authorList>
    </citation>
    <scope>NUCLEOTIDE SEQUENCE [GENOMIC RNA]</scope>
</reference>
<reference key="2">
    <citation type="journal article" date="1997" name="J. Virol.">
        <title>Polarized entry and release in epithelial cells of Black Creek Canal virus, a New World hantavirus.</title>
        <authorList>
            <person name="Ravkov E.V."/>
            <person name="Nichol S.T."/>
            <person name="Compans R.W."/>
        </authorList>
    </citation>
    <scope>SUBCELLULAR LOCATION (GLYCOPROTEIN N)</scope>
    <scope>SUBCELLULAR LOCATION (GLYCOPROTEIN C)</scope>
</reference>
<reference key="3">
    <citation type="journal article" date="2014" name="Viruses">
        <title>Hantavirus Gn and Gc envelope glycoproteins: key structural units for virus cell entry and virus assembly.</title>
        <authorList>
            <person name="Cifuentes-Munoz N."/>
            <person name="Salazar-Quiroz N."/>
            <person name="Tischler N.D."/>
        </authorList>
    </citation>
    <scope>REVIEW</scope>
</reference>
<dbReference type="EMBL" id="L39950">
    <property type="status" value="NOT_ANNOTATED_CDS"/>
    <property type="molecule type" value="Genomic_RNA"/>
</dbReference>
<dbReference type="SMR" id="P0DTJ0"/>
<dbReference type="GlyCosmos" id="P0DTJ0">
    <property type="glycosylation" value="4 sites, No reported glycans"/>
</dbReference>
<dbReference type="GO" id="GO:0044167">
    <property type="term" value="C:host cell endoplasmic reticulum membrane"/>
    <property type="evidence" value="ECO:0007669"/>
    <property type="project" value="UniProtKB-SubCell"/>
</dbReference>
<dbReference type="GO" id="GO:0044178">
    <property type="term" value="C:host cell Golgi membrane"/>
    <property type="evidence" value="ECO:0007669"/>
    <property type="project" value="UniProtKB-SubCell"/>
</dbReference>
<dbReference type="GO" id="GO:0033650">
    <property type="term" value="C:host cell mitochondrion"/>
    <property type="evidence" value="ECO:0007669"/>
    <property type="project" value="UniProtKB-SubCell"/>
</dbReference>
<dbReference type="GO" id="GO:0044228">
    <property type="term" value="C:host cell surface"/>
    <property type="evidence" value="ECO:0007669"/>
    <property type="project" value="UniProtKB-SubCell"/>
</dbReference>
<dbReference type="GO" id="GO:0016020">
    <property type="term" value="C:membrane"/>
    <property type="evidence" value="ECO:0007669"/>
    <property type="project" value="UniProtKB-KW"/>
</dbReference>
<dbReference type="GO" id="GO:0019031">
    <property type="term" value="C:viral envelope"/>
    <property type="evidence" value="ECO:0007669"/>
    <property type="project" value="UniProtKB-KW"/>
</dbReference>
<dbReference type="GO" id="GO:0055036">
    <property type="term" value="C:virion membrane"/>
    <property type="evidence" value="ECO:0007669"/>
    <property type="project" value="UniProtKB-SubCell"/>
</dbReference>
<dbReference type="GO" id="GO:0008270">
    <property type="term" value="F:zinc ion binding"/>
    <property type="evidence" value="ECO:0007669"/>
    <property type="project" value="UniProtKB-KW"/>
</dbReference>
<dbReference type="GO" id="GO:0075509">
    <property type="term" value="P:endocytosis involved in viral entry into host cell"/>
    <property type="evidence" value="ECO:0007669"/>
    <property type="project" value="UniProtKB-KW"/>
</dbReference>
<dbReference type="GO" id="GO:0039654">
    <property type="term" value="P:fusion of virus membrane with host endosome membrane"/>
    <property type="evidence" value="ECO:0007669"/>
    <property type="project" value="UniProtKB-KW"/>
</dbReference>
<dbReference type="GO" id="GO:0007165">
    <property type="term" value="P:signal transduction"/>
    <property type="evidence" value="ECO:0007669"/>
    <property type="project" value="InterPro"/>
</dbReference>
<dbReference type="GO" id="GO:0039520">
    <property type="term" value="P:symbiont-mediated activation of host autophagy"/>
    <property type="evidence" value="ECO:0007669"/>
    <property type="project" value="UniProtKB-KW"/>
</dbReference>
<dbReference type="GO" id="GO:0039545">
    <property type="term" value="P:symbiont-mediated suppression of host cytoplasmic pattern recognition receptor signaling pathway via inhibition of MAVS activity"/>
    <property type="evidence" value="ECO:0007669"/>
    <property type="project" value="UniProtKB-KW"/>
</dbReference>
<dbReference type="GO" id="GO:0039527">
    <property type="term" value="P:symbiont-mediated suppression of host TRAF-mediated signal transduction"/>
    <property type="evidence" value="ECO:0007669"/>
    <property type="project" value="UniProtKB-KW"/>
</dbReference>
<dbReference type="GO" id="GO:0019062">
    <property type="term" value="P:virion attachment to host cell"/>
    <property type="evidence" value="ECO:0007669"/>
    <property type="project" value="UniProtKB-KW"/>
</dbReference>
<dbReference type="Gene3D" id="1.10.8.1320">
    <property type="match status" value="1"/>
</dbReference>
<dbReference type="InterPro" id="IPR048791">
    <property type="entry name" value="Gc_C_bunya"/>
</dbReference>
<dbReference type="InterPro" id="IPR048790">
    <property type="entry name" value="Gn-B_hanta"/>
</dbReference>
<dbReference type="InterPro" id="IPR002532">
    <property type="entry name" value="Hanta_Gc_N"/>
</dbReference>
<dbReference type="InterPro" id="IPR002534">
    <property type="entry name" value="Hanta_Gn-H"/>
</dbReference>
<dbReference type="InterPro" id="IPR012316">
    <property type="entry name" value="ITAM_motif_hantavir-typ"/>
</dbReference>
<dbReference type="Pfam" id="PF20682">
    <property type="entry name" value="Hanta_Gc_C"/>
    <property type="match status" value="1"/>
</dbReference>
<dbReference type="Pfam" id="PF01561">
    <property type="entry name" value="Hanta_Gc_N"/>
    <property type="match status" value="1"/>
</dbReference>
<dbReference type="Pfam" id="PF20679">
    <property type="entry name" value="Hanta_Gn-B"/>
    <property type="match status" value="1"/>
</dbReference>
<dbReference type="Pfam" id="PF01567">
    <property type="entry name" value="Hanta_Gn-H"/>
    <property type="match status" value="1"/>
</dbReference>
<dbReference type="Pfam" id="PF10538">
    <property type="entry name" value="ITAM_Cys-rich"/>
    <property type="match status" value="1"/>
</dbReference>
<dbReference type="PROSITE" id="PS51056">
    <property type="entry name" value="ITAM_2"/>
    <property type="match status" value="1"/>
</dbReference>
<keyword id="KW-1072">Activation of host autophagy by virus</keyword>
<keyword id="KW-1015">Disulfide bond</keyword>
<keyword id="KW-1170">Fusion of virus membrane with host endosomal membrane</keyword>
<keyword id="KW-1168">Fusion of virus membrane with host membrane</keyword>
<keyword id="KW-0325">Glycoprotein</keyword>
<keyword id="KW-1038">Host endoplasmic reticulum</keyword>
<keyword id="KW-1040">Host Golgi apparatus</keyword>
<keyword id="KW-1043">Host membrane</keyword>
<keyword id="KW-1045">Host mitochondrion</keyword>
<keyword id="KW-0945">Host-virus interaction</keyword>
<keyword id="KW-1090">Inhibition of host innate immune response by virus</keyword>
<keyword id="KW-1097">Inhibition of host MAVS by virus</keyword>
<keyword id="KW-1113">Inhibition of host RLR pathway by virus</keyword>
<keyword id="KW-1110">Inhibition of host TRAFs by virus</keyword>
<keyword id="KW-0472">Membrane</keyword>
<keyword id="KW-0479">Metal-binding</keyword>
<keyword id="KW-0597">Phosphoprotein</keyword>
<keyword id="KW-0677">Repeat</keyword>
<keyword id="KW-0732">Signal</keyword>
<keyword id="KW-0812">Transmembrane</keyword>
<keyword id="KW-1133">Transmembrane helix</keyword>
<keyword id="KW-1161">Viral attachment to host cell</keyword>
<keyword id="KW-0261">Viral envelope protein</keyword>
<keyword id="KW-0899">Viral immunoevasion</keyword>
<keyword id="KW-1162">Viral penetration into host cytoplasm</keyword>
<keyword id="KW-0946">Virion</keyword>
<keyword id="KW-1164">Virus endocytosis by host</keyword>
<keyword id="KW-1160">Virus entry into host cell</keyword>
<keyword id="KW-0862">Zinc</keyword>
<keyword id="KW-0863">Zinc-finger</keyword>
<proteinExistence type="inferred from homology"/>